<accession>Q06698</accession>
<accession>D6VZ55</accession>
<evidence type="ECO:0000250" key="1"/>
<evidence type="ECO:0000255" key="2">
    <source>
        <dbReference type="PROSITE-ProRule" id="PRU00179"/>
    </source>
</evidence>
<evidence type="ECO:0000255" key="3">
    <source>
        <dbReference type="PROSITE-ProRule" id="PRU00212"/>
    </source>
</evidence>
<evidence type="ECO:0000255" key="4">
    <source>
        <dbReference type="PROSITE-ProRule" id="PRU00541"/>
    </source>
</evidence>
<evidence type="ECO:0000255" key="5">
    <source>
        <dbReference type="PROSITE-ProRule" id="PRU00542"/>
    </source>
</evidence>
<evidence type="ECO:0000256" key="6">
    <source>
        <dbReference type="SAM" id="MobiDB-lite"/>
    </source>
</evidence>
<evidence type="ECO:0000269" key="7">
    <source>
    </source>
</evidence>
<evidence type="ECO:0000269" key="8">
    <source>
    </source>
</evidence>
<evidence type="ECO:0000305" key="9"/>
<evidence type="ECO:0007744" key="10">
    <source>
    </source>
</evidence>
<dbReference type="EC" id="3.6.4.13"/>
<dbReference type="EMBL" id="U20162">
    <property type="protein sequence ID" value="AAB67492.1"/>
    <property type="molecule type" value="Genomic_DNA"/>
</dbReference>
<dbReference type="EMBL" id="BK006945">
    <property type="protein sequence ID" value="DAA09721.1"/>
    <property type="molecule type" value="Genomic_DNA"/>
</dbReference>
<dbReference type="PIR" id="S59384">
    <property type="entry name" value="S59384"/>
</dbReference>
<dbReference type="RefSeq" id="NP_013523.3">
    <property type="nucleotide sequence ID" value="NM_001182307.3"/>
</dbReference>
<dbReference type="SMR" id="Q06698"/>
<dbReference type="BioGRID" id="31677">
    <property type="interactions" value="112"/>
</dbReference>
<dbReference type="FunCoup" id="Q06698">
    <property type="interactions" value="1088"/>
</dbReference>
<dbReference type="IntAct" id="Q06698">
    <property type="interactions" value="41"/>
</dbReference>
<dbReference type="MINT" id="Q06698"/>
<dbReference type="STRING" id="4932.YLR419W"/>
<dbReference type="iPTMnet" id="Q06698"/>
<dbReference type="PaxDb" id="4932-YLR419W"/>
<dbReference type="PeptideAtlas" id="Q06698"/>
<dbReference type="EnsemblFungi" id="YLR419W_mRNA">
    <property type="protein sequence ID" value="YLR419W"/>
    <property type="gene ID" value="YLR419W"/>
</dbReference>
<dbReference type="GeneID" id="851137"/>
<dbReference type="KEGG" id="sce:YLR419W"/>
<dbReference type="AGR" id="SGD:S000004411"/>
<dbReference type="SGD" id="S000004411">
    <property type="gene designation" value="YLR419W"/>
</dbReference>
<dbReference type="VEuPathDB" id="FungiDB:YLR419W"/>
<dbReference type="eggNOG" id="KOG0920">
    <property type="taxonomic scope" value="Eukaryota"/>
</dbReference>
<dbReference type="GeneTree" id="ENSGT00940000158279"/>
<dbReference type="HOGENOM" id="CLU_001832_4_0_1"/>
<dbReference type="InParanoid" id="Q06698"/>
<dbReference type="OMA" id="LFRVCNM"/>
<dbReference type="OrthoDB" id="5600252at2759"/>
<dbReference type="BioCyc" id="YEAST:G3O-32480-MONOMER"/>
<dbReference type="BioGRID-ORCS" id="851137">
    <property type="hits" value="0 hits in 10 CRISPR screens"/>
</dbReference>
<dbReference type="PRO" id="PR:Q06698"/>
<dbReference type="Proteomes" id="UP000002311">
    <property type="component" value="Chromosome XII"/>
</dbReference>
<dbReference type="RNAct" id="Q06698">
    <property type="molecule type" value="protein"/>
</dbReference>
<dbReference type="GO" id="GO:0005737">
    <property type="term" value="C:cytoplasm"/>
    <property type="evidence" value="ECO:0007005"/>
    <property type="project" value="SGD"/>
</dbReference>
<dbReference type="GO" id="GO:0005739">
    <property type="term" value="C:mitochondrion"/>
    <property type="evidence" value="ECO:0007005"/>
    <property type="project" value="SGD"/>
</dbReference>
<dbReference type="GO" id="GO:0005524">
    <property type="term" value="F:ATP binding"/>
    <property type="evidence" value="ECO:0007669"/>
    <property type="project" value="UniProtKB-KW"/>
</dbReference>
<dbReference type="GO" id="GO:0016887">
    <property type="term" value="F:ATP hydrolysis activity"/>
    <property type="evidence" value="ECO:0007669"/>
    <property type="project" value="RHEA"/>
</dbReference>
<dbReference type="GO" id="GO:0004386">
    <property type="term" value="F:helicase activity"/>
    <property type="evidence" value="ECO:0000318"/>
    <property type="project" value="GO_Central"/>
</dbReference>
<dbReference type="GO" id="GO:0003729">
    <property type="term" value="F:mRNA binding"/>
    <property type="evidence" value="ECO:0007005"/>
    <property type="project" value="SGD"/>
</dbReference>
<dbReference type="GO" id="GO:0003723">
    <property type="term" value="F:RNA binding"/>
    <property type="evidence" value="ECO:0000318"/>
    <property type="project" value="GO_Central"/>
</dbReference>
<dbReference type="GO" id="GO:0003724">
    <property type="term" value="F:RNA helicase activity"/>
    <property type="evidence" value="ECO:0007669"/>
    <property type="project" value="UniProtKB-EC"/>
</dbReference>
<dbReference type="CDD" id="cd17917">
    <property type="entry name" value="DEXHc_RHA-like"/>
    <property type="match status" value="1"/>
</dbReference>
<dbReference type="CDD" id="cd23827">
    <property type="entry name" value="RWD_YLR419W-like"/>
    <property type="match status" value="1"/>
</dbReference>
<dbReference type="CDD" id="cd18791">
    <property type="entry name" value="SF2_C_RHA"/>
    <property type="match status" value="1"/>
</dbReference>
<dbReference type="CDD" id="cd14271">
    <property type="entry name" value="UBA_YLR419W_like"/>
    <property type="match status" value="1"/>
</dbReference>
<dbReference type="FunFam" id="1.20.120.1080:FF:000031">
    <property type="entry name" value="ATP-dependent RNA helicase"/>
    <property type="match status" value="1"/>
</dbReference>
<dbReference type="FunFam" id="3.40.50.300:FF:000325">
    <property type="entry name" value="ATP-dependent RNA helicase DHX29"/>
    <property type="match status" value="1"/>
</dbReference>
<dbReference type="FunFam" id="3.40.50.300:FF:001214">
    <property type="entry name" value="DExH-box ATP-dependent RNA helicase"/>
    <property type="match status" value="1"/>
</dbReference>
<dbReference type="FunFam" id="3.10.110.10:FF:000128">
    <property type="entry name" value="YLR419Wp putative helicase"/>
    <property type="match status" value="1"/>
</dbReference>
<dbReference type="Gene3D" id="1.20.120.1080">
    <property type="match status" value="1"/>
</dbReference>
<dbReference type="Gene3D" id="3.40.50.300">
    <property type="entry name" value="P-loop containing nucleotide triphosphate hydrolases"/>
    <property type="match status" value="2"/>
</dbReference>
<dbReference type="Gene3D" id="3.10.110.10">
    <property type="entry name" value="Ubiquitin Conjugating Enzyme"/>
    <property type="match status" value="1"/>
</dbReference>
<dbReference type="InterPro" id="IPR011709">
    <property type="entry name" value="DEAD-box_helicase_OB_fold"/>
</dbReference>
<dbReference type="InterPro" id="IPR011545">
    <property type="entry name" value="DEAD/DEAH_box_helicase_dom"/>
</dbReference>
<dbReference type="InterPro" id="IPR056328">
    <property type="entry name" value="DSRM_DHX29"/>
</dbReference>
<dbReference type="InterPro" id="IPR007502">
    <property type="entry name" value="Helicase-assoc_dom"/>
</dbReference>
<dbReference type="InterPro" id="IPR014001">
    <property type="entry name" value="Helicase_ATP-bd"/>
</dbReference>
<dbReference type="InterPro" id="IPR001650">
    <property type="entry name" value="Helicase_C-like"/>
</dbReference>
<dbReference type="InterPro" id="IPR027417">
    <property type="entry name" value="P-loop_NTPase"/>
</dbReference>
<dbReference type="InterPro" id="IPR006575">
    <property type="entry name" value="RWD_dom"/>
</dbReference>
<dbReference type="InterPro" id="IPR015940">
    <property type="entry name" value="UBA"/>
</dbReference>
<dbReference type="InterPro" id="IPR009060">
    <property type="entry name" value="UBA-like_sf"/>
</dbReference>
<dbReference type="InterPro" id="IPR016135">
    <property type="entry name" value="UBQ-conjugating_enzyme/RWD"/>
</dbReference>
<dbReference type="InterPro" id="IPR035467">
    <property type="entry name" value="YLR419W-like_UBA"/>
</dbReference>
<dbReference type="PANTHER" id="PTHR18934">
    <property type="entry name" value="ATP-DEPENDENT RNA HELICASE"/>
    <property type="match status" value="1"/>
</dbReference>
<dbReference type="PANTHER" id="PTHR18934:SF267">
    <property type="entry name" value="ATP-DEPENDENT RNA HELICASE YLR419W-RELATED"/>
    <property type="match status" value="1"/>
</dbReference>
<dbReference type="Pfam" id="PF00270">
    <property type="entry name" value="DEAD"/>
    <property type="match status" value="1"/>
</dbReference>
<dbReference type="Pfam" id="PF24385">
    <property type="entry name" value="DSRM_DHX29"/>
    <property type="match status" value="1"/>
</dbReference>
<dbReference type="Pfam" id="PF00271">
    <property type="entry name" value="Helicase_C"/>
    <property type="match status" value="1"/>
</dbReference>
<dbReference type="Pfam" id="PF07717">
    <property type="entry name" value="OB_NTP_bind"/>
    <property type="match status" value="1"/>
</dbReference>
<dbReference type="Pfam" id="PF05773">
    <property type="entry name" value="RWD"/>
    <property type="match status" value="1"/>
</dbReference>
<dbReference type="SMART" id="SM00487">
    <property type="entry name" value="DEXDc"/>
    <property type="match status" value="1"/>
</dbReference>
<dbReference type="SMART" id="SM00847">
    <property type="entry name" value="HA2"/>
    <property type="match status" value="1"/>
</dbReference>
<dbReference type="SMART" id="SM00490">
    <property type="entry name" value="HELICc"/>
    <property type="match status" value="1"/>
</dbReference>
<dbReference type="SMART" id="SM00591">
    <property type="entry name" value="RWD"/>
    <property type="match status" value="1"/>
</dbReference>
<dbReference type="SMART" id="SM00165">
    <property type="entry name" value="UBA"/>
    <property type="match status" value="1"/>
</dbReference>
<dbReference type="SUPFAM" id="SSF52540">
    <property type="entry name" value="P-loop containing nucleoside triphosphate hydrolases"/>
    <property type="match status" value="1"/>
</dbReference>
<dbReference type="SUPFAM" id="SSF46934">
    <property type="entry name" value="UBA-like"/>
    <property type="match status" value="1"/>
</dbReference>
<dbReference type="SUPFAM" id="SSF54495">
    <property type="entry name" value="UBC-like"/>
    <property type="match status" value="1"/>
</dbReference>
<dbReference type="PROSITE" id="PS51192">
    <property type="entry name" value="HELICASE_ATP_BIND_1"/>
    <property type="match status" value="1"/>
</dbReference>
<dbReference type="PROSITE" id="PS51194">
    <property type="entry name" value="HELICASE_CTER"/>
    <property type="match status" value="1"/>
</dbReference>
<dbReference type="PROSITE" id="PS50908">
    <property type="entry name" value="RWD"/>
    <property type="match status" value="1"/>
</dbReference>
<dbReference type="PROSITE" id="PS50030">
    <property type="entry name" value="UBA"/>
    <property type="match status" value="1"/>
</dbReference>
<organism>
    <name type="scientific">Saccharomyces cerevisiae (strain ATCC 204508 / S288c)</name>
    <name type="common">Baker's yeast</name>
    <dbReference type="NCBI Taxonomy" id="559292"/>
    <lineage>
        <taxon>Eukaryota</taxon>
        <taxon>Fungi</taxon>
        <taxon>Dikarya</taxon>
        <taxon>Ascomycota</taxon>
        <taxon>Saccharomycotina</taxon>
        <taxon>Saccharomycetes</taxon>
        <taxon>Saccharomycetales</taxon>
        <taxon>Saccharomycetaceae</taxon>
        <taxon>Saccharomyces</taxon>
    </lineage>
</organism>
<comment type="function">
    <text evidence="1">Probable ATP-binding RNA helicase.</text>
</comment>
<comment type="catalytic activity">
    <reaction>
        <text>ATP + H2O = ADP + phosphate + H(+)</text>
        <dbReference type="Rhea" id="RHEA:13065"/>
        <dbReference type="ChEBI" id="CHEBI:15377"/>
        <dbReference type="ChEBI" id="CHEBI:15378"/>
        <dbReference type="ChEBI" id="CHEBI:30616"/>
        <dbReference type="ChEBI" id="CHEBI:43474"/>
        <dbReference type="ChEBI" id="CHEBI:456216"/>
        <dbReference type="EC" id="3.6.4.13"/>
    </reaction>
</comment>
<comment type="subcellular location">
    <subcellularLocation>
        <location evidence="7">Cytoplasm</location>
    </subcellularLocation>
</comment>
<comment type="miscellaneous">
    <text evidence="8">Present with 195 molecules/cell in log phase SD medium.</text>
</comment>
<comment type="similarity">
    <text evidence="9">Belongs to the DEAD box helicase family. DEAH subfamily.</text>
</comment>
<gene>
    <name type="ordered locus">YLR419W</name>
</gene>
<sequence>MAKKTKNNSKSSTPVNDVPTTAGKKKAKGKKGQEPEPEDDKRAKQQSNRAKVTSTASWTGKLPHTILHETCQKRKWNKVEYDMKKIGDKGFIAIAVLSFTDPKTKETLTARMNDPTYDKASGKGLVIPQETPIEARHMASTIALYRIAYNTNLHMMLPPNHRKTWYALDDFRKDNLKTDEKRINKLFDLDPFKTMVEDRKLKAQREKEQVAQNNQAQKEQVARTILSSHGGISSSGKDRQERKVASHKNSHNPSLVRFPKKVWENSIFVDLDESSRQLIETSLKEKIDWQAKKISHKNETIAENREDLKAKLLTLQFRPKHVEEAMLYKDPLSFLLFNLPEDDLPPFFHKKKGDTKNKVEITNLPLSTRMIVERLTEIGVSSDEALLALQQNDMNENEAAGFLTREILPTLNSNTNEPVSETESIECWNQELESLESIYEGCVMDAKEDSHYTLNLIEKLKIKLKVYRTKNYPASLPGIVVSTFDKNYKLPDYIKKQILTRLLHYLQEGNLIGDMLVYHIYEWLKENISKIIDNPGPLIPDSDSKGAINKRNISNGKRSINNSSSRKFTKTTISEDTLSVLREEYTKRIKSSEYKSMQLVREQLPAWKKQKVIIDIINKNEVVLITGETGSGKSTQVVQFILDFLQKEKGDFGKTKIVCTQPRRISAIGLAERVSDERCVTCGEEVGYVIRGVNKTKASTRIKFMTTGVLVRLLQNARTMLENTIVVIDEVHERSIDTDLIVTLMKNLLHRVRGMKIVLMSATVNVDLFKKFFPGLATCHIEGRTFPITDYFLEDILSDLDFKIKREKALSYDDDSVDERNNDDQYLKPRADSKFFTSGQINYDLLCQVVEYVHKRLKAANDNGSIIVFLPGVGEINKCCNLLANKSNEADFMVLPLHSALTPEDQKRVFKKYHGKRKVVVSTNIAETSITIDDCVATIDTGRAKSMFYNPKDNTTKLIESFISKAEVKQRRGRAGRVREGLSYKLFSKNLYENDMISMPIPEIKRIPLESLYLSVKAMGIKDVKAFLSTALDAPPLPALQKAERILTTIGLVDESDKSLTQLGQFISLMPVMDSKHGKLLIYGILFGCTDISVLLVSILGIGVLPFIGGFENREKIKKLLCKYESRGDLFAVLEIVRDYFKIKDSSIKRKYLRDNLLSYNKINEIKSSTAQYYSILKDVGFLPMDYKVGSISDLNRNERNFDILRAILTGAFYPHIARVQLPDVKYLSTSSGAVEKDPEAKMIKYWIRSEEYQDKLEEYKTKISQETQKVDLEDLPLPATRAFIHPSSVLFSTNSVNLEDAKLLSEVDGPISRQSKIPTVVKYPFVLFTTSQVTNKLYLRDLTPTTTLSLLLFGGAISYDIGGTIHSPGIVVDNWLPIRTWCKNGVLIKELRTQLDEAIRKKLESPDYAKKSQIDNSGADKTLKIVEKIIASEQ</sequence>
<reference key="1">
    <citation type="journal article" date="1997" name="Nature">
        <title>The nucleotide sequence of Saccharomyces cerevisiae chromosome XII.</title>
        <authorList>
            <person name="Johnston M."/>
            <person name="Hillier L.W."/>
            <person name="Riles L."/>
            <person name="Albermann K."/>
            <person name="Andre B."/>
            <person name="Ansorge W."/>
            <person name="Benes V."/>
            <person name="Brueckner M."/>
            <person name="Delius H."/>
            <person name="Dubois E."/>
            <person name="Duesterhoeft A."/>
            <person name="Entian K.-D."/>
            <person name="Floeth M."/>
            <person name="Goffeau A."/>
            <person name="Hebling U."/>
            <person name="Heumann K."/>
            <person name="Heuss-Neitzel D."/>
            <person name="Hilbert H."/>
            <person name="Hilger F."/>
            <person name="Kleine K."/>
            <person name="Koetter P."/>
            <person name="Louis E.J."/>
            <person name="Messenguy F."/>
            <person name="Mewes H.-W."/>
            <person name="Miosga T."/>
            <person name="Moestl D."/>
            <person name="Mueller-Auer S."/>
            <person name="Nentwich U."/>
            <person name="Obermaier B."/>
            <person name="Piravandi E."/>
            <person name="Pohl T.M."/>
            <person name="Portetelle D."/>
            <person name="Purnelle B."/>
            <person name="Rechmann S."/>
            <person name="Rieger M."/>
            <person name="Rinke M."/>
            <person name="Rose M."/>
            <person name="Scharfe M."/>
            <person name="Scherens B."/>
            <person name="Scholler P."/>
            <person name="Schwager C."/>
            <person name="Schwarz S."/>
            <person name="Underwood A.P."/>
            <person name="Urrestarazu L.A."/>
            <person name="Vandenbol M."/>
            <person name="Verhasselt P."/>
            <person name="Vierendeels F."/>
            <person name="Voet M."/>
            <person name="Volckaert G."/>
            <person name="Voss H."/>
            <person name="Wambutt R."/>
            <person name="Wedler E."/>
            <person name="Wedler H."/>
            <person name="Zimmermann F.K."/>
            <person name="Zollner A."/>
            <person name="Hani J."/>
            <person name="Hoheisel J.D."/>
        </authorList>
    </citation>
    <scope>NUCLEOTIDE SEQUENCE [LARGE SCALE GENOMIC DNA]</scope>
    <source>
        <strain>ATCC 204508 / S288c</strain>
    </source>
</reference>
<reference key="2">
    <citation type="journal article" date="2014" name="G3 (Bethesda)">
        <title>The reference genome sequence of Saccharomyces cerevisiae: Then and now.</title>
        <authorList>
            <person name="Engel S.R."/>
            <person name="Dietrich F.S."/>
            <person name="Fisk D.G."/>
            <person name="Binkley G."/>
            <person name="Balakrishnan R."/>
            <person name="Costanzo M.C."/>
            <person name="Dwight S.S."/>
            <person name="Hitz B.C."/>
            <person name="Karra K."/>
            <person name="Nash R.S."/>
            <person name="Weng S."/>
            <person name="Wong E.D."/>
            <person name="Lloyd P."/>
            <person name="Skrzypek M.S."/>
            <person name="Miyasato S.R."/>
            <person name="Simison M."/>
            <person name="Cherry J.M."/>
        </authorList>
    </citation>
    <scope>GENOME REANNOTATION</scope>
    <source>
        <strain>ATCC 204508 / S288c</strain>
    </source>
</reference>
<reference key="3">
    <citation type="journal article" date="2003" name="Nature">
        <title>Global analysis of protein localization in budding yeast.</title>
        <authorList>
            <person name="Huh W.-K."/>
            <person name="Falvo J.V."/>
            <person name="Gerke L.C."/>
            <person name="Carroll A.S."/>
            <person name="Howson R.W."/>
            <person name="Weissman J.S."/>
            <person name="O'Shea E.K."/>
        </authorList>
    </citation>
    <scope>SUBCELLULAR LOCATION [LARGE SCALE ANALYSIS]</scope>
</reference>
<reference key="4">
    <citation type="journal article" date="2003" name="Nature">
        <title>Global analysis of protein expression in yeast.</title>
        <authorList>
            <person name="Ghaemmaghami S."/>
            <person name="Huh W.-K."/>
            <person name="Bower K."/>
            <person name="Howson R.W."/>
            <person name="Belle A."/>
            <person name="Dephoure N."/>
            <person name="O'Shea E.K."/>
            <person name="Weissman J.S."/>
        </authorList>
    </citation>
    <scope>LEVEL OF PROTEIN EXPRESSION [LARGE SCALE ANALYSIS]</scope>
</reference>
<reference key="5">
    <citation type="journal article" date="2008" name="Mol. Cell. Proteomics">
        <title>A multidimensional chromatography technology for in-depth phosphoproteome analysis.</title>
        <authorList>
            <person name="Albuquerque C.P."/>
            <person name="Smolka M.B."/>
            <person name="Payne S.H."/>
            <person name="Bafna V."/>
            <person name="Eng J."/>
            <person name="Zhou H."/>
        </authorList>
    </citation>
    <scope>IDENTIFICATION BY MASS SPECTROMETRY [LARGE SCALE ANALYSIS]</scope>
</reference>
<reference key="6">
    <citation type="journal article" date="2009" name="Science">
        <title>Global analysis of Cdk1 substrate phosphorylation sites provides insights into evolution.</title>
        <authorList>
            <person name="Holt L.J."/>
            <person name="Tuch B.B."/>
            <person name="Villen J."/>
            <person name="Johnson A.D."/>
            <person name="Gygi S.P."/>
            <person name="Morgan D.O."/>
        </authorList>
    </citation>
    <scope>PHOSPHORYLATION [LARGE SCALE ANALYSIS] AT SER-9 AND SER-816</scope>
    <scope>IDENTIFICATION BY MASS SPECTROMETRY [LARGE SCALE ANALYSIS]</scope>
</reference>
<proteinExistence type="evidence at protein level"/>
<name>YL419_YEAST</name>
<protein>
    <recommendedName>
        <fullName>Putative ATP-dependent RNA helicase YLR419W</fullName>
        <ecNumber>3.6.4.13</ecNumber>
    </recommendedName>
</protein>
<keyword id="KW-0067">ATP-binding</keyword>
<keyword id="KW-0963">Cytoplasm</keyword>
<keyword id="KW-0347">Helicase</keyword>
<keyword id="KW-0378">Hydrolase</keyword>
<keyword id="KW-0547">Nucleotide-binding</keyword>
<keyword id="KW-0597">Phosphoprotein</keyword>
<keyword id="KW-1185">Reference proteome</keyword>
<feature type="chain" id="PRO_0000247257" description="Putative ATP-dependent RNA helicase YLR419W">
    <location>
        <begin position="1"/>
        <end position="1435"/>
    </location>
</feature>
<feature type="domain" description="UBA" evidence="3">
    <location>
        <begin position="365"/>
        <end position="406"/>
    </location>
</feature>
<feature type="domain" description="RWD" evidence="2">
    <location>
        <begin position="430"/>
        <end position="531"/>
    </location>
</feature>
<feature type="domain" description="Helicase ATP-binding" evidence="4">
    <location>
        <begin position="614"/>
        <end position="782"/>
    </location>
</feature>
<feature type="domain" description="Helicase C-terminal" evidence="5">
    <location>
        <begin position="845"/>
        <end position="1020"/>
    </location>
</feature>
<feature type="region of interest" description="Disordered" evidence="6">
    <location>
        <begin position="1"/>
        <end position="57"/>
    </location>
</feature>
<feature type="region of interest" description="Disordered" evidence="6">
    <location>
        <begin position="226"/>
        <end position="251"/>
    </location>
</feature>
<feature type="region of interest" description="Disordered" evidence="6">
    <location>
        <begin position="543"/>
        <end position="566"/>
    </location>
</feature>
<feature type="short sequence motif" description="DEAH box">
    <location>
        <begin position="729"/>
        <end position="732"/>
    </location>
</feature>
<feature type="compositionally biased region" description="Basic and acidic residues" evidence="6">
    <location>
        <begin position="31"/>
        <end position="43"/>
    </location>
</feature>
<feature type="compositionally biased region" description="Polar residues" evidence="6">
    <location>
        <begin position="45"/>
        <end position="57"/>
    </location>
</feature>
<feature type="compositionally biased region" description="Polar residues" evidence="6">
    <location>
        <begin position="551"/>
        <end position="566"/>
    </location>
</feature>
<feature type="binding site" evidence="4">
    <location>
        <begin position="627"/>
        <end position="634"/>
    </location>
    <ligand>
        <name>ATP</name>
        <dbReference type="ChEBI" id="CHEBI:30616"/>
    </ligand>
</feature>
<feature type="modified residue" description="Phosphoserine" evidence="10">
    <location>
        <position position="9"/>
    </location>
</feature>
<feature type="modified residue" description="Phosphoserine" evidence="10">
    <location>
        <position position="816"/>
    </location>
</feature>